<accession>Q75C99</accession>
<name>HAT2_EREGS</name>
<keyword id="KW-0156">Chromatin regulator</keyword>
<keyword id="KW-0963">Cytoplasm</keyword>
<keyword id="KW-0539">Nucleus</keyword>
<keyword id="KW-1185">Reference proteome</keyword>
<keyword id="KW-0677">Repeat</keyword>
<keyword id="KW-0853">WD repeat</keyword>
<feature type="chain" id="PRO_0000227732" description="Histone acetyltransferase type B subunit 2">
    <location>
        <begin position="1"/>
        <end position="423"/>
    </location>
</feature>
<feature type="repeat" description="WD 1">
    <location>
        <begin position="138"/>
        <end position="174"/>
    </location>
</feature>
<feature type="repeat" description="WD 2">
    <location>
        <begin position="175"/>
        <end position="224"/>
    </location>
</feature>
<feature type="repeat" description="WD 3">
    <location>
        <begin position="228"/>
        <end position="268"/>
    </location>
</feature>
<feature type="repeat" description="WD 4">
    <location>
        <begin position="271"/>
        <end position="311"/>
    </location>
</feature>
<feature type="repeat" description="WD 5">
    <location>
        <begin position="315"/>
        <end position="355"/>
    </location>
</feature>
<feature type="repeat" description="WD 6">
    <location>
        <begin position="372"/>
        <end position="412"/>
    </location>
</feature>
<feature type="region of interest" description="Interaction with the histone H4 N-terminus" evidence="2">
    <location>
        <begin position="357"/>
        <end position="361"/>
    </location>
</feature>
<feature type="site" description="Important for interaction with HAT1" evidence="2">
    <location>
        <position position="288"/>
    </location>
</feature>
<protein>
    <recommendedName>
        <fullName>Histone acetyltransferase type B subunit 2</fullName>
    </recommendedName>
</protein>
<dbReference type="EMBL" id="AE016816">
    <property type="protein sequence ID" value="AAS51244.1"/>
    <property type="molecule type" value="Genomic_DNA"/>
</dbReference>
<dbReference type="RefSeq" id="NP_983420.1">
    <property type="nucleotide sequence ID" value="NM_208773.1"/>
</dbReference>
<dbReference type="SMR" id="Q75C99"/>
<dbReference type="FunCoup" id="Q75C99">
    <property type="interactions" value="1132"/>
</dbReference>
<dbReference type="STRING" id="284811.Q75C99"/>
<dbReference type="EnsemblFungi" id="AAS51244">
    <property type="protein sequence ID" value="AAS51244"/>
    <property type="gene ID" value="AGOS_ACR017W"/>
</dbReference>
<dbReference type="GeneID" id="4619545"/>
<dbReference type="KEGG" id="ago:AGOS_ACR017W"/>
<dbReference type="eggNOG" id="KOG0264">
    <property type="taxonomic scope" value="Eukaryota"/>
</dbReference>
<dbReference type="HOGENOM" id="CLU_020445_3_1_1"/>
<dbReference type="InParanoid" id="Q75C99"/>
<dbReference type="OMA" id="PHEEGCL"/>
<dbReference type="OrthoDB" id="427795at2759"/>
<dbReference type="Proteomes" id="UP000000591">
    <property type="component" value="Chromosome III"/>
</dbReference>
<dbReference type="GO" id="GO:0000781">
    <property type="term" value="C:chromosome, telomeric region"/>
    <property type="evidence" value="ECO:0007669"/>
    <property type="project" value="GOC"/>
</dbReference>
<dbReference type="GO" id="GO:0005737">
    <property type="term" value="C:cytoplasm"/>
    <property type="evidence" value="ECO:0000318"/>
    <property type="project" value="GO_Central"/>
</dbReference>
<dbReference type="GO" id="GO:0000123">
    <property type="term" value="C:histone acetyltransferase complex"/>
    <property type="evidence" value="ECO:0007669"/>
    <property type="project" value="EnsemblFungi"/>
</dbReference>
<dbReference type="GO" id="GO:0005634">
    <property type="term" value="C:nucleus"/>
    <property type="evidence" value="ECO:0000318"/>
    <property type="project" value="GO_Central"/>
</dbReference>
<dbReference type="GO" id="GO:0033698">
    <property type="term" value="C:Rpd3L complex"/>
    <property type="evidence" value="ECO:0000318"/>
    <property type="project" value="GO_Central"/>
</dbReference>
<dbReference type="GO" id="GO:0070210">
    <property type="term" value="C:Rpd3L-Expanded complex"/>
    <property type="evidence" value="ECO:0000318"/>
    <property type="project" value="GO_Central"/>
</dbReference>
<dbReference type="GO" id="GO:0004402">
    <property type="term" value="F:histone acetyltransferase activity"/>
    <property type="evidence" value="ECO:0007669"/>
    <property type="project" value="EnsemblFungi"/>
</dbReference>
<dbReference type="GO" id="GO:0042393">
    <property type="term" value="F:histone binding"/>
    <property type="evidence" value="ECO:0000318"/>
    <property type="project" value="GO_Central"/>
</dbReference>
<dbReference type="GO" id="GO:0006338">
    <property type="term" value="P:chromatin remodeling"/>
    <property type="evidence" value="ECO:0000318"/>
    <property type="project" value="GO_Central"/>
</dbReference>
<dbReference type="GO" id="GO:0006355">
    <property type="term" value="P:regulation of DNA-templated transcription"/>
    <property type="evidence" value="ECO:0000318"/>
    <property type="project" value="GO_Central"/>
</dbReference>
<dbReference type="GO" id="GO:0031509">
    <property type="term" value="P:subtelomeric heterochromatin formation"/>
    <property type="evidence" value="ECO:0007669"/>
    <property type="project" value="EnsemblFungi"/>
</dbReference>
<dbReference type="Gene3D" id="2.130.10.10">
    <property type="entry name" value="YVTN repeat-like/Quinoprotein amine dehydrogenase"/>
    <property type="match status" value="1"/>
</dbReference>
<dbReference type="InterPro" id="IPR022052">
    <property type="entry name" value="Histone-bd_RBBP4-like_N"/>
</dbReference>
<dbReference type="InterPro" id="IPR015943">
    <property type="entry name" value="WD40/YVTN_repeat-like_dom_sf"/>
</dbReference>
<dbReference type="InterPro" id="IPR019775">
    <property type="entry name" value="WD40_repeat_CS"/>
</dbReference>
<dbReference type="InterPro" id="IPR036322">
    <property type="entry name" value="WD40_repeat_dom_sf"/>
</dbReference>
<dbReference type="InterPro" id="IPR001680">
    <property type="entry name" value="WD40_rpt"/>
</dbReference>
<dbReference type="InterPro" id="IPR050459">
    <property type="entry name" value="WD_repeat_RBAP46/RBAP48/MSI1"/>
</dbReference>
<dbReference type="PANTHER" id="PTHR22850">
    <property type="entry name" value="WD40 REPEAT FAMILY"/>
    <property type="match status" value="1"/>
</dbReference>
<dbReference type="Pfam" id="PF12265">
    <property type="entry name" value="CAF1C_H4-bd"/>
    <property type="match status" value="1"/>
</dbReference>
<dbReference type="Pfam" id="PF00400">
    <property type="entry name" value="WD40"/>
    <property type="match status" value="3"/>
</dbReference>
<dbReference type="SMART" id="SM00320">
    <property type="entry name" value="WD40"/>
    <property type="match status" value="6"/>
</dbReference>
<dbReference type="SUPFAM" id="SSF50978">
    <property type="entry name" value="WD40 repeat-like"/>
    <property type="match status" value="1"/>
</dbReference>
<dbReference type="PROSITE" id="PS00678">
    <property type="entry name" value="WD_REPEATS_1"/>
    <property type="match status" value="2"/>
</dbReference>
<dbReference type="PROSITE" id="PS50082">
    <property type="entry name" value="WD_REPEATS_2"/>
    <property type="match status" value="3"/>
</dbReference>
<dbReference type="PROSITE" id="PS50294">
    <property type="entry name" value="WD_REPEATS_REGION"/>
    <property type="match status" value="1"/>
</dbReference>
<organism>
    <name type="scientific">Eremothecium gossypii (strain ATCC 10895 / CBS 109.51 / FGSC 9923 / NRRL Y-1056)</name>
    <name type="common">Yeast</name>
    <name type="synonym">Ashbya gossypii</name>
    <dbReference type="NCBI Taxonomy" id="284811"/>
    <lineage>
        <taxon>Eukaryota</taxon>
        <taxon>Fungi</taxon>
        <taxon>Dikarya</taxon>
        <taxon>Ascomycota</taxon>
        <taxon>Saccharomycotina</taxon>
        <taxon>Saccharomycetes</taxon>
        <taxon>Saccharomycetales</taxon>
        <taxon>Saccharomycetaceae</taxon>
        <taxon>Eremothecium</taxon>
    </lineage>
</organism>
<sequence>MTTKLKGLKELGNTSDPLRTVSYQVRTKMSDYEDDNTDVQSLTVEEEYELWNSNVPVMYEFVSETKLTWPSLTIQWLPSDGQSPEQSLIFGTHTAGEEVNYLKVATINLPAGIAGLDQGDEEDEANDHSSFAIANKFPHIEEVIRARYMPANSNIIATINGKGTISIFDRTLEESKAQVSTLAFHKENGYGLAFNPHISGELLSGSDDTTVALWDIEAAKKPKSILTSHDDIVNDVKWHEFESNVFGTVSEDKTLQVHDKRVRLEPVKKLPTASPFNTLSFSKHSRNLLAAAGVDSQIYLYDMRDMSSPLHVMSGHQDSVTTVEFSPHTDGIICSSGSDRRAIIWDLTQIGAEQSQDDADDGAPELMMMHAGHRSPVNEFSFNPQIPWLLASTEEDNVIQAWKVSMKLVNASPPAISDPSLLV</sequence>
<gene>
    <name type="primary">HAT2</name>
    <name type="ordered locus">ACR017W</name>
</gene>
<proteinExistence type="inferred from homology"/>
<reference key="1">
    <citation type="journal article" date="2004" name="Science">
        <title>The Ashbya gossypii genome as a tool for mapping the ancient Saccharomyces cerevisiae genome.</title>
        <authorList>
            <person name="Dietrich F.S."/>
            <person name="Voegeli S."/>
            <person name="Brachat S."/>
            <person name="Lerch A."/>
            <person name="Gates K."/>
            <person name="Steiner S."/>
            <person name="Mohr C."/>
            <person name="Poehlmann R."/>
            <person name="Luedi P."/>
            <person name="Choi S."/>
            <person name="Wing R.A."/>
            <person name="Flavier A."/>
            <person name="Gaffney T.D."/>
            <person name="Philippsen P."/>
        </authorList>
    </citation>
    <scope>NUCLEOTIDE SEQUENCE [LARGE SCALE GENOMIC DNA]</scope>
    <source>
        <strain>ATCC 10895 / CBS 109.51 / FGSC 9923 / NRRL Y-1056</strain>
    </source>
</reference>
<reference key="2">
    <citation type="journal article" date="2013" name="G3 (Bethesda)">
        <title>Genomes of Ashbya fungi isolated from insects reveal four mating-type loci, numerous translocations, lack of transposons, and distinct gene duplications.</title>
        <authorList>
            <person name="Dietrich F.S."/>
            <person name="Voegeli S."/>
            <person name="Kuo S."/>
            <person name="Philippsen P."/>
        </authorList>
    </citation>
    <scope>GENOME REANNOTATION</scope>
    <source>
        <strain>ATCC 10895 / CBS 109.51 / FGSC 9923 / NRRL Y-1056</strain>
    </source>
</reference>
<evidence type="ECO:0000250" key="1"/>
<evidence type="ECO:0000250" key="2">
    <source>
        <dbReference type="UniProtKB" id="P39984"/>
    </source>
</evidence>
<evidence type="ECO:0000305" key="3"/>
<comment type="function">
    <text evidence="2">Regulatory subunit of the histone acetylase B (HAT-B) complex. The complex acetylates 'Lys-12' of histone H4 which is required for telomeric silencing.</text>
</comment>
<comment type="subunit">
    <text evidence="2">Component of the HAT-B complex composed of at least HAT1 and HAT2. The HAT-B complex binds to histone H4 tail.</text>
</comment>
<comment type="subcellular location">
    <subcellularLocation>
        <location evidence="1">Cytoplasm</location>
    </subcellularLocation>
    <subcellularLocation>
        <location evidence="1">Nucleus</location>
    </subcellularLocation>
</comment>
<comment type="similarity">
    <text evidence="3">Belongs to the WD repeat RBAP46/RBAP48/MSI1 family.</text>
</comment>